<feature type="chain" id="PRO_0000172369" description="Large ribosomal subunit protein bL32">
    <location>
        <begin position="1"/>
        <end position="59"/>
    </location>
</feature>
<keyword id="KW-1185">Reference proteome</keyword>
<keyword id="KW-0687">Ribonucleoprotein</keyword>
<keyword id="KW-0689">Ribosomal protein</keyword>
<organism>
    <name type="scientific">Malacoplasma penetrans (strain HF-2)</name>
    <name type="common">Mycoplasma penetrans</name>
    <dbReference type="NCBI Taxonomy" id="272633"/>
    <lineage>
        <taxon>Bacteria</taxon>
        <taxon>Bacillati</taxon>
        <taxon>Mycoplasmatota</taxon>
        <taxon>Mycoplasmoidales</taxon>
        <taxon>Mycoplasmoidaceae</taxon>
        <taxon>Malacoplasma</taxon>
    </lineage>
</organism>
<accession>Q8EUK2</accession>
<name>RL32_MALP2</name>
<reference key="1">
    <citation type="journal article" date="2002" name="Nucleic Acids Res.">
        <title>The complete genomic sequence of Mycoplasma penetrans, an intracellular bacterial pathogen in humans.</title>
        <authorList>
            <person name="Sasaki Y."/>
            <person name="Ishikawa J."/>
            <person name="Yamashita A."/>
            <person name="Oshima K."/>
            <person name="Kenri T."/>
            <person name="Furuya K."/>
            <person name="Yoshino C."/>
            <person name="Horino A."/>
            <person name="Shiba T."/>
            <person name="Sasaki T."/>
            <person name="Hattori M."/>
        </authorList>
    </citation>
    <scope>NUCLEOTIDE SEQUENCE [LARGE SCALE GENOMIC DNA]</scope>
    <source>
        <strain>HF-2</strain>
    </source>
</reference>
<gene>
    <name evidence="1" type="primary">rpmF</name>
    <name type="ordered locus">MYPE9200</name>
</gene>
<proteinExistence type="inferred from homology"/>
<evidence type="ECO:0000255" key="1">
    <source>
        <dbReference type="HAMAP-Rule" id="MF_00340"/>
    </source>
</evidence>
<evidence type="ECO:0000305" key="2"/>
<dbReference type="EMBL" id="BA000026">
    <property type="protein sequence ID" value="BAC44710.1"/>
    <property type="molecule type" value="Genomic_DNA"/>
</dbReference>
<dbReference type="RefSeq" id="WP_011077739.1">
    <property type="nucleotide sequence ID" value="NC_004432.1"/>
</dbReference>
<dbReference type="SMR" id="Q8EUK2"/>
<dbReference type="STRING" id="272633.gene:10732041"/>
<dbReference type="KEGG" id="mpe:MYPE9200"/>
<dbReference type="eggNOG" id="COG0333">
    <property type="taxonomic scope" value="Bacteria"/>
</dbReference>
<dbReference type="HOGENOM" id="CLU_129084_1_3_14"/>
<dbReference type="InParanoid" id="Q8EUK2"/>
<dbReference type="Proteomes" id="UP000002522">
    <property type="component" value="Chromosome"/>
</dbReference>
<dbReference type="GO" id="GO:0015934">
    <property type="term" value="C:large ribosomal subunit"/>
    <property type="evidence" value="ECO:0007669"/>
    <property type="project" value="InterPro"/>
</dbReference>
<dbReference type="GO" id="GO:0003735">
    <property type="term" value="F:structural constituent of ribosome"/>
    <property type="evidence" value="ECO:0007669"/>
    <property type="project" value="InterPro"/>
</dbReference>
<dbReference type="GO" id="GO:0006412">
    <property type="term" value="P:translation"/>
    <property type="evidence" value="ECO:0007669"/>
    <property type="project" value="UniProtKB-UniRule"/>
</dbReference>
<dbReference type="HAMAP" id="MF_00340">
    <property type="entry name" value="Ribosomal_bL32"/>
    <property type="match status" value="1"/>
</dbReference>
<dbReference type="InterPro" id="IPR002677">
    <property type="entry name" value="Ribosomal_bL32"/>
</dbReference>
<dbReference type="InterPro" id="IPR044957">
    <property type="entry name" value="Ribosomal_bL32_bact"/>
</dbReference>
<dbReference type="InterPro" id="IPR011332">
    <property type="entry name" value="Ribosomal_zn-bd"/>
</dbReference>
<dbReference type="NCBIfam" id="TIGR01031">
    <property type="entry name" value="rpmF_bact"/>
    <property type="match status" value="1"/>
</dbReference>
<dbReference type="PANTHER" id="PTHR35534">
    <property type="entry name" value="50S RIBOSOMAL PROTEIN L32"/>
    <property type="match status" value="1"/>
</dbReference>
<dbReference type="PANTHER" id="PTHR35534:SF1">
    <property type="entry name" value="LARGE RIBOSOMAL SUBUNIT PROTEIN BL32"/>
    <property type="match status" value="1"/>
</dbReference>
<dbReference type="Pfam" id="PF01783">
    <property type="entry name" value="Ribosomal_L32p"/>
    <property type="match status" value="1"/>
</dbReference>
<dbReference type="SUPFAM" id="SSF57829">
    <property type="entry name" value="Zn-binding ribosomal proteins"/>
    <property type="match status" value="1"/>
</dbReference>
<sequence length="59" mass="6655">MAVPQRKVTHSRKAKRGSHLHLSIPTLVACKRCGKKITPHRVCNSCGYYKNKKVPQIEA</sequence>
<protein>
    <recommendedName>
        <fullName evidence="1">Large ribosomal subunit protein bL32</fullName>
    </recommendedName>
    <alternativeName>
        <fullName evidence="2">50S ribosomal protein L32</fullName>
    </alternativeName>
</protein>
<comment type="similarity">
    <text evidence="1">Belongs to the bacterial ribosomal protein bL32 family.</text>
</comment>